<proteinExistence type="inferred from homology"/>
<dbReference type="EC" id="3.5.1.-" evidence="1"/>
<dbReference type="EMBL" id="AP009378">
    <property type="protein sequence ID" value="BAI54455.1"/>
    <property type="molecule type" value="Genomic_DNA"/>
</dbReference>
<dbReference type="RefSeq" id="WP_001295944.1">
    <property type="nucleotide sequence ID" value="NC_013654.1"/>
</dbReference>
<dbReference type="SMR" id="D2NGI6"/>
<dbReference type="ESTHER" id="ecoli-rutD">
    <property type="family name" value="RutD"/>
</dbReference>
<dbReference type="KEGG" id="ese:ECSF_0915"/>
<dbReference type="PATRIC" id="fig|431946.3.peg.959"/>
<dbReference type="HOGENOM" id="CLU_020336_50_1_6"/>
<dbReference type="GO" id="GO:0016020">
    <property type="term" value="C:membrane"/>
    <property type="evidence" value="ECO:0007669"/>
    <property type="project" value="TreeGrafter"/>
</dbReference>
<dbReference type="GO" id="GO:0016811">
    <property type="term" value="F:hydrolase activity, acting on carbon-nitrogen (but not peptide) bonds, in linear amides"/>
    <property type="evidence" value="ECO:0007669"/>
    <property type="project" value="InterPro"/>
</dbReference>
<dbReference type="GO" id="GO:0019740">
    <property type="term" value="P:nitrogen utilization"/>
    <property type="evidence" value="ECO:0007669"/>
    <property type="project" value="UniProtKB-UniRule"/>
</dbReference>
<dbReference type="GO" id="GO:0006212">
    <property type="term" value="P:uracil catabolic process"/>
    <property type="evidence" value="ECO:0007669"/>
    <property type="project" value="UniProtKB-UniRule"/>
</dbReference>
<dbReference type="FunFam" id="3.40.50.1820:FF:000052">
    <property type="entry name" value="Putative aminoacrylate hydrolase RutD"/>
    <property type="match status" value="1"/>
</dbReference>
<dbReference type="Gene3D" id="3.40.50.1820">
    <property type="entry name" value="alpha/beta hydrolase"/>
    <property type="match status" value="1"/>
</dbReference>
<dbReference type="HAMAP" id="MF_00832">
    <property type="entry name" value="RutD"/>
    <property type="match status" value="1"/>
</dbReference>
<dbReference type="InterPro" id="IPR000073">
    <property type="entry name" value="AB_hydrolase_1"/>
</dbReference>
<dbReference type="InterPro" id="IPR029058">
    <property type="entry name" value="AB_hydrolase_fold"/>
</dbReference>
<dbReference type="InterPro" id="IPR050266">
    <property type="entry name" value="AB_hydrolase_sf"/>
</dbReference>
<dbReference type="InterPro" id="IPR019913">
    <property type="entry name" value="Pyrimidine_utilisation_RutD"/>
</dbReference>
<dbReference type="NCBIfam" id="TIGR03611">
    <property type="entry name" value="RutD"/>
    <property type="match status" value="1"/>
</dbReference>
<dbReference type="PANTHER" id="PTHR43798:SF27">
    <property type="entry name" value="HYDROLASE ALPHA_BETA HYDROLASE FOLD FAMILY"/>
    <property type="match status" value="1"/>
</dbReference>
<dbReference type="PANTHER" id="PTHR43798">
    <property type="entry name" value="MONOACYLGLYCEROL LIPASE"/>
    <property type="match status" value="1"/>
</dbReference>
<dbReference type="Pfam" id="PF00561">
    <property type="entry name" value="Abhydrolase_1"/>
    <property type="match status" value="1"/>
</dbReference>
<dbReference type="PRINTS" id="PR00111">
    <property type="entry name" value="ABHYDROLASE"/>
</dbReference>
<dbReference type="SUPFAM" id="SSF53474">
    <property type="entry name" value="alpha/beta-Hydrolases"/>
    <property type="match status" value="1"/>
</dbReference>
<protein>
    <recommendedName>
        <fullName evidence="1">Putative carbamate hydrolase RutD</fullName>
        <ecNumber evidence="1">3.5.1.-</ecNumber>
    </recommendedName>
    <alternativeName>
        <fullName evidence="1">Aminohydrolase</fullName>
    </alternativeName>
</protein>
<evidence type="ECO:0000255" key="1">
    <source>
        <dbReference type="HAMAP-Rule" id="MF_00832"/>
    </source>
</evidence>
<accession>D2NGI6</accession>
<organism>
    <name type="scientific">Escherichia coli O150:H5 (strain SE15)</name>
    <dbReference type="NCBI Taxonomy" id="431946"/>
    <lineage>
        <taxon>Bacteria</taxon>
        <taxon>Pseudomonadati</taxon>
        <taxon>Pseudomonadota</taxon>
        <taxon>Gammaproteobacteria</taxon>
        <taxon>Enterobacterales</taxon>
        <taxon>Enterobacteriaceae</taxon>
        <taxon>Escherichia</taxon>
    </lineage>
</organism>
<sequence>MKLSLSPPPYADAPVVVLISGLGGSGSYWLPQLAVLDQEYQVVCYDQRGTGNNPDTLAEDYSIAQMAAELHQALVAAGIERYAVVGHALGALVGMQLALDYPASVTVLVSVNGWLRINTHTRRCFQVREQLLHSGGAQAWVEAQPLFLYPADWMAARAPRLEAEDALALAHFQGKNNLLRRLNALKRADFSHHADRIRCPVQIICASDDLLVPTACSSELHAALPDSQKMVMRYGGHACNVTDPETFNALLLNGLASLLHHREAAL</sequence>
<keyword id="KW-0378">Hydrolase</keyword>
<comment type="function">
    <text evidence="1">Involved in pyrimidine catabolism. May facilitate the hydrolysis of carbamate, a reaction that can also occur spontaneously.</text>
</comment>
<comment type="catalytic activity">
    <reaction evidence="1">
        <text>carbamate + 2 H(+) = NH4(+) + CO2</text>
        <dbReference type="Rhea" id="RHEA:15649"/>
        <dbReference type="ChEBI" id="CHEBI:13941"/>
        <dbReference type="ChEBI" id="CHEBI:15378"/>
        <dbReference type="ChEBI" id="CHEBI:16526"/>
        <dbReference type="ChEBI" id="CHEBI:28938"/>
    </reaction>
</comment>
<comment type="similarity">
    <text evidence="1">Belongs to the AB hydrolase superfamily. Hydrolase RutD family.</text>
</comment>
<gene>
    <name evidence="1" type="primary">rutD</name>
    <name type="ordered locus">ECSF_0915</name>
</gene>
<name>RUTD_ECOS5</name>
<reference key="1">
    <citation type="journal article" date="2010" name="J. Bacteriol.">
        <title>Complete genome sequence of the wild-type commensal Escherichia coli strain SE15, belonging to phylogenetic group B2.</title>
        <authorList>
            <person name="Toh H."/>
            <person name="Oshima K."/>
            <person name="Toyoda A."/>
            <person name="Ogura Y."/>
            <person name="Ooka T."/>
            <person name="Sasamoto H."/>
            <person name="Park S.H."/>
            <person name="Iyoda S."/>
            <person name="Kurokawa K."/>
            <person name="Morita H."/>
            <person name="Itoh K."/>
            <person name="Taylor T.D."/>
            <person name="Hayashi T."/>
            <person name="Hattori M."/>
        </authorList>
    </citation>
    <scope>NUCLEOTIDE SEQUENCE [LARGE SCALE GENOMIC DNA]</scope>
    <source>
        <strain>SE15</strain>
    </source>
</reference>
<feature type="chain" id="PRO_0000402951" description="Putative carbamate hydrolase RutD">
    <location>
        <begin position="1"/>
        <end position="266"/>
    </location>
</feature>